<feature type="signal peptide" evidence="4">
    <location>
        <begin position="1"/>
        <end position="24"/>
    </location>
</feature>
<feature type="chain" id="PRO_0000389000" description="LRR receptor-like serine/threonine-protein kinase ERECTA">
    <location>
        <begin position="25"/>
        <end position="976"/>
    </location>
</feature>
<feature type="topological domain" description="Extracellular" evidence="4">
    <location>
        <begin position="25"/>
        <end position="580"/>
    </location>
</feature>
<feature type="transmembrane region" description="Helical" evidence="4">
    <location>
        <begin position="581"/>
        <end position="601"/>
    </location>
</feature>
<feature type="topological domain" description="Cytoplasmic" evidence="4">
    <location>
        <begin position="602"/>
        <end position="976"/>
    </location>
</feature>
<feature type="repeat" description="LRR 1">
    <location>
        <begin position="69"/>
        <end position="92"/>
    </location>
</feature>
<feature type="repeat" description="LRR 2">
    <location>
        <begin position="93"/>
        <end position="115"/>
    </location>
</feature>
<feature type="repeat" description="LRR 3">
    <location>
        <begin position="117"/>
        <end position="140"/>
    </location>
</feature>
<feature type="repeat" description="LRR 4">
    <location>
        <begin position="141"/>
        <end position="163"/>
    </location>
</feature>
<feature type="repeat" description="LRR 5">
    <location>
        <begin position="165"/>
        <end position="187"/>
    </location>
</feature>
<feature type="repeat" description="LRR 6">
    <location>
        <begin position="189"/>
        <end position="212"/>
    </location>
</feature>
<feature type="repeat" description="LRR 7">
    <location>
        <begin position="213"/>
        <end position="235"/>
    </location>
</feature>
<feature type="repeat" description="LRR 8">
    <location>
        <begin position="237"/>
        <end position="259"/>
    </location>
</feature>
<feature type="repeat" description="LRR 9">
    <location>
        <begin position="260"/>
        <end position="282"/>
    </location>
</feature>
<feature type="repeat" description="LRR 10">
    <location>
        <begin position="284"/>
        <end position="306"/>
    </location>
</feature>
<feature type="repeat" description="LRR 11">
    <location>
        <begin position="308"/>
        <end position="330"/>
    </location>
</feature>
<feature type="repeat" description="LRR 12">
    <location>
        <begin position="332"/>
        <end position="355"/>
    </location>
</feature>
<feature type="repeat" description="LRR 13">
    <location>
        <begin position="356"/>
        <end position="379"/>
    </location>
</feature>
<feature type="repeat" description="LRR 14">
    <location>
        <begin position="380"/>
        <end position="401"/>
    </location>
</feature>
<feature type="repeat" description="LRR 15">
    <location>
        <begin position="404"/>
        <end position="425"/>
    </location>
</feature>
<feature type="repeat" description="LRR 16">
    <location>
        <begin position="428"/>
        <end position="449"/>
    </location>
</feature>
<feature type="repeat" description="LRR 17">
    <location>
        <begin position="452"/>
        <end position="473"/>
    </location>
</feature>
<feature type="repeat" description="LRR 18">
    <location>
        <begin position="476"/>
        <end position="498"/>
    </location>
</feature>
<feature type="repeat" description="LRR 19">
    <location>
        <begin position="500"/>
        <end position="522"/>
    </location>
</feature>
<feature type="repeat" description="LRR 20">
    <location>
        <begin position="523"/>
        <end position="545"/>
    </location>
</feature>
<feature type="domain" description="Protein kinase" evidence="5">
    <location>
        <begin position="648"/>
        <end position="918"/>
    </location>
</feature>
<feature type="active site" description="Proton acceptor" evidence="5 6">
    <location>
        <position position="773"/>
    </location>
</feature>
<feature type="binding site" evidence="5">
    <location>
        <begin position="654"/>
        <end position="662"/>
    </location>
    <ligand>
        <name>ATP</name>
        <dbReference type="ChEBI" id="CHEBI:30616"/>
    </ligand>
</feature>
<feature type="binding site" evidence="5">
    <location>
        <position position="676"/>
    </location>
    <ligand>
        <name>ATP</name>
        <dbReference type="ChEBI" id="CHEBI:30616"/>
    </ligand>
</feature>
<feature type="modified residue" description="Phosphothreonine" evidence="2">
    <location>
        <position position="645"/>
    </location>
</feature>
<feature type="modified residue" description="Phosphotyrosine" evidence="2">
    <location>
        <position position="721"/>
    </location>
</feature>
<feature type="modified residue" description="Phosphotyrosine" evidence="1">
    <location>
        <position position="760"/>
    </location>
</feature>
<feature type="modified residue" description="Phosphotyrosine" evidence="1">
    <location>
        <position position="815"/>
    </location>
</feature>
<feature type="modified residue" description="Phosphothreonine" evidence="3">
    <location>
        <position position="823"/>
    </location>
</feature>
<feature type="glycosylation site" description="N-linked (GlcNAc...) asparagine" evidence="4">
    <location>
        <position position="65"/>
    </location>
</feature>
<feature type="glycosylation site" description="N-linked (GlcNAc...) asparagine" evidence="4">
    <location>
        <position position="74"/>
    </location>
</feature>
<feature type="glycosylation site" description="N-linked (GlcNAc...) asparagine" evidence="4">
    <location>
        <position position="221"/>
    </location>
</feature>
<feature type="glycosylation site" description="N-linked (GlcNAc...) asparagine" evidence="4">
    <location>
        <position position="234"/>
    </location>
</feature>
<feature type="glycosylation site" description="N-linked (GlcNAc...) asparagine" evidence="4">
    <location>
        <position position="305"/>
    </location>
</feature>
<feature type="glycosylation site" description="N-linked (GlcNAc...) asparagine" evidence="4">
    <location>
        <position position="329"/>
    </location>
</feature>
<feature type="glycosylation site" description="N-linked (GlcNAc...) asparagine" evidence="4">
    <location>
        <position position="409"/>
    </location>
</feature>
<feature type="glycosylation site" description="N-linked (GlcNAc...) asparagine" evidence="4">
    <location>
        <position position="457"/>
    </location>
</feature>
<feature type="glycosylation site" description="N-linked (GlcNAc...) asparagine" evidence="4">
    <location>
        <position position="510"/>
    </location>
</feature>
<feature type="glycosylation site" description="N-linked (GlcNAc...) asparagine" evidence="4">
    <location>
        <position position="528"/>
    </location>
</feature>
<feature type="glycosylation site" description="N-linked (GlcNAc...) asparagine" evidence="4">
    <location>
        <position position="543"/>
    </location>
</feature>
<feature type="sequence variant" description="Er-1 in strain: cv. Landsberg erecta; round leaves, compact inflorescence, blunt fruits, short and thick siliques and petioles, susceptibility to pathogens such as R.solanacearum, P.irregulare and P.cucumerina, abnormal cell-wall composition and increased canalization of rosette leaf number during long days. In er-101 and er-102, compact inflorescence with short siliques and pedicels." evidence="9 12 18 23 32 34">
    <original>I</original>
    <variation>K</variation>
    <location>
        <position position="750"/>
    </location>
</feature>
<feature type="sequence variant" description="In strain: cv. Mt-0." evidence="17">
    <original>V</original>
    <variation>M</variation>
    <location>
        <position position="886"/>
    </location>
</feature>
<feature type="mutagenesis site" description="In er-103; compact inflorescence with short siliques, but normal leaves." evidence="16 32">
    <original>M</original>
    <variation>I</variation>
    <location>
        <position position="282"/>
    </location>
</feature>
<feature type="mutagenesis site" description="In er-117; compact inflorescence with short siliques and pedicels, and susceptibility to P.cucumerina." evidence="12 34">
    <original>G</original>
    <variation>D</variation>
    <location>
        <position position="489"/>
    </location>
</feature>
<feature type="mutagenesis site" description="In er-114; compact inflorescence with short siliques and pedicels, and susceptibility to P.cucumerina." evidence="12 34">
    <original>D</original>
    <variation>N</variation>
    <location>
        <position position="831"/>
    </location>
</feature>
<gene>
    <name evidence="36" type="primary">ERECTA</name>
    <name type="synonym">ER</name>
    <name type="synonym">QRP1</name>
    <name type="synonym">QRS1</name>
    <name type="synonym">TE1</name>
    <name evidence="38" type="ordered locus">At2g26330</name>
    <name evidence="35" type="ORF">T1D16.3</name>
</gene>
<organism>
    <name type="scientific">Arabidopsis thaliana</name>
    <name type="common">Mouse-ear cress</name>
    <dbReference type="NCBI Taxonomy" id="3702"/>
    <lineage>
        <taxon>Eukaryota</taxon>
        <taxon>Viridiplantae</taxon>
        <taxon>Streptophyta</taxon>
        <taxon>Embryophyta</taxon>
        <taxon>Tracheophyta</taxon>
        <taxon>Spermatophyta</taxon>
        <taxon>Magnoliopsida</taxon>
        <taxon>eudicotyledons</taxon>
        <taxon>Gunneridae</taxon>
        <taxon>Pentapetalae</taxon>
        <taxon>rosids</taxon>
        <taxon>malvids</taxon>
        <taxon>Brassicales</taxon>
        <taxon>Brassicaceae</taxon>
        <taxon>Camelineae</taxon>
        <taxon>Arabidopsis</taxon>
    </lineage>
</organism>
<protein>
    <recommendedName>
        <fullName evidence="36">LRR receptor-like serine/threonine-protein kinase ERECTA</fullName>
        <ecNumber>2.7.11.1</ecNumber>
    </recommendedName>
    <alternativeName>
        <fullName>Protein QUANTITATIVE RESISTANCE TO PLECTOSPHAERELLA 1</fullName>
    </alternativeName>
    <alternativeName>
        <fullName>Protein QUANTITATIVE RESISTANCE TO RALSTONIA SOLANACEARUM 1</fullName>
    </alternativeName>
    <alternativeName>
        <fullName>Protein TRANSPIRATION EFFICIENCY 1</fullName>
    </alternativeName>
</protein>
<evidence type="ECO:0000250" key="1">
    <source>
        <dbReference type="UniProtKB" id="C0LGT6"/>
    </source>
</evidence>
<evidence type="ECO:0000250" key="2">
    <source>
        <dbReference type="UniProtKB" id="O22476"/>
    </source>
</evidence>
<evidence type="ECO:0000250" key="3">
    <source>
        <dbReference type="UniProtKB" id="Q9M0G7"/>
    </source>
</evidence>
<evidence type="ECO:0000255" key="4"/>
<evidence type="ECO:0000255" key="5">
    <source>
        <dbReference type="PROSITE-ProRule" id="PRU00159"/>
    </source>
</evidence>
<evidence type="ECO:0000255" key="6">
    <source>
        <dbReference type="PROSITE-ProRule" id="PRU10027"/>
    </source>
</evidence>
<evidence type="ECO:0000269" key="7">
    <source>
    </source>
</evidence>
<evidence type="ECO:0000269" key="8">
    <source>
    </source>
</evidence>
<evidence type="ECO:0000269" key="9">
    <source>
    </source>
</evidence>
<evidence type="ECO:0000269" key="10">
    <source>
    </source>
</evidence>
<evidence type="ECO:0000269" key="11">
    <source>
    </source>
</evidence>
<evidence type="ECO:0000269" key="12">
    <source>
    </source>
</evidence>
<evidence type="ECO:0000269" key="13">
    <source>
    </source>
</evidence>
<evidence type="ECO:0000269" key="14">
    <source>
    </source>
</evidence>
<evidence type="ECO:0000269" key="15">
    <source>
    </source>
</evidence>
<evidence type="ECO:0000269" key="16">
    <source>
    </source>
</evidence>
<evidence type="ECO:0000269" key="17">
    <source>
    </source>
</evidence>
<evidence type="ECO:0000269" key="18">
    <source>
    </source>
</evidence>
<evidence type="ECO:0000269" key="19">
    <source>
    </source>
</evidence>
<evidence type="ECO:0000269" key="20">
    <source>
    </source>
</evidence>
<evidence type="ECO:0000269" key="21">
    <source>
    </source>
</evidence>
<evidence type="ECO:0000269" key="22">
    <source>
    </source>
</evidence>
<evidence type="ECO:0000269" key="23">
    <source>
    </source>
</evidence>
<evidence type="ECO:0000269" key="24">
    <source>
    </source>
</evidence>
<evidence type="ECO:0000269" key="25">
    <source>
    </source>
</evidence>
<evidence type="ECO:0000269" key="26">
    <source>
    </source>
</evidence>
<evidence type="ECO:0000269" key="27">
    <source>
    </source>
</evidence>
<evidence type="ECO:0000269" key="28">
    <source>
    </source>
</evidence>
<evidence type="ECO:0000269" key="29">
    <source>
    </source>
</evidence>
<evidence type="ECO:0000269" key="30">
    <source>
    </source>
</evidence>
<evidence type="ECO:0000269" key="31">
    <source>
    </source>
</evidence>
<evidence type="ECO:0000269" key="32">
    <source>
    </source>
</evidence>
<evidence type="ECO:0000269" key="33">
    <source>
    </source>
</evidence>
<evidence type="ECO:0000269" key="34">
    <source ref="9"/>
</evidence>
<evidence type="ECO:0000303" key="35">
    <source>
    </source>
</evidence>
<evidence type="ECO:0000303" key="36">
    <source>
    </source>
</evidence>
<evidence type="ECO:0000305" key="37"/>
<evidence type="ECO:0000312" key="38">
    <source>
        <dbReference type="Araport" id="AT2G26330"/>
    </source>
</evidence>
<proteinExistence type="evidence at protein level"/>
<keyword id="KW-0067">ATP-binding</keyword>
<keyword id="KW-1003">Cell membrane</keyword>
<keyword id="KW-0961">Cell wall biogenesis/degradation</keyword>
<keyword id="KW-0217">Developmental protein</keyword>
<keyword id="KW-0325">Glycoprotein</keyword>
<keyword id="KW-0418">Kinase</keyword>
<keyword id="KW-0433">Leucine-rich repeat</keyword>
<keyword id="KW-0472">Membrane</keyword>
<keyword id="KW-0547">Nucleotide-binding</keyword>
<keyword id="KW-0597">Phosphoprotein</keyword>
<keyword id="KW-0611">Plant defense</keyword>
<keyword id="KW-0675">Receptor</keyword>
<keyword id="KW-1185">Reference proteome</keyword>
<keyword id="KW-0677">Repeat</keyword>
<keyword id="KW-0723">Serine/threonine-protein kinase</keyword>
<keyword id="KW-0732">Signal</keyword>
<keyword id="KW-0808">Transferase</keyword>
<keyword id="KW-0812">Transmembrane</keyword>
<keyword id="KW-1133">Transmembrane helix</keyword>
<comment type="function">
    <text evidence="7 8 9 10 11 12 13 14 15 16 18 19 20 21 22 23 25 26 27 31 32 34">Receptor kinase that, together with ERL1 and ERL2, regulates aerial architecture, including inflorescence (e.g. shoot apical meristem-originating organ shape, elongation of the internode and pedicels, and adaxial-abaxial polarity), and stomatal patterning (e.g. density and clustering), probably by tuning cell division and expansion. Redundantly involved with ERL1 in procambial development regulation. Forms a functional ligand-receptor pair with EPF2 (AC Q8LC53) (PubMed:22241782). Modulates plant transpiration efficiency by controlling stomatal density, leaf photosynthetic capacity, epidermal cell expansion, mesophyll cell proliferation and cell-cell contact. A phloem-specific expression of ER is sufficient for proper inflorescence architecture (PubMed:22474391). Probable major trait regulating canalization (maintenance of phenotype despite varying environment) in many aspect of the plant physiology (e.g. plant morphology, light-dependent leaves number, branch number, flowering time, phytate and mineral concentrations) by transducing microenvironmental variation into phenotypic differentiation (ecological amplifier). May maintain development integrity in heat stress conditions. Regulates cell wall composition and structure. Confers resistance to the pathogenic bacteria Ralstonia solanacearum and to the necrotrophic fungi Plectosphaerella cucumerina and Pythium irregulare, and required for callose deposition upon infection. Resistance to P.cucumerina seems cell wall-mediated. Forms a constitutive complex with TMM involved in the recognition of the stomatal regulatory peptides EPF1, EPF2 and EPFL9/STOMAGEN (PubMed:28536146).</text>
</comment>
<comment type="catalytic activity">
    <reaction>
        <text>L-seryl-[protein] + ATP = O-phospho-L-seryl-[protein] + ADP + H(+)</text>
        <dbReference type="Rhea" id="RHEA:17989"/>
        <dbReference type="Rhea" id="RHEA-COMP:9863"/>
        <dbReference type="Rhea" id="RHEA-COMP:11604"/>
        <dbReference type="ChEBI" id="CHEBI:15378"/>
        <dbReference type="ChEBI" id="CHEBI:29999"/>
        <dbReference type="ChEBI" id="CHEBI:30616"/>
        <dbReference type="ChEBI" id="CHEBI:83421"/>
        <dbReference type="ChEBI" id="CHEBI:456216"/>
        <dbReference type="EC" id="2.7.11.1"/>
    </reaction>
</comment>
<comment type="catalytic activity">
    <reaction>
        <text>L-threonyl-[protein] + ATP = O-phospho-L-threonyl-[protein] + ADP + H(+)</text>
        <dbReference type="Rhea" id="RHEA:46608"/>
        <dbReference type="Rhea" id="RHEA-COMP:11060"/>
        <dbReference type="Rhea" id="RHEA-COMP:11605"/>
        <dbReference type="ChEBI" id="CHEBI:15378"/>
        <dbReference type="ChEBI" id="CHEBI:30013"/>
        <dbReference type="ChEBI" id="CHEBI:30616"/>
        <dbReference type="ChEBI" id="CHEBI:61977"/>
        <dbReference type="ChEBI" id="CHEBI:456216"/>
        <dbReference type="EC" id="2.7.11.1"/>
    </reaction>
</comment>
<comment type="subunit">
    <text evidence="24 25 26 28 30 31">Homodimer and heterodimer with ERL1 and TMM. Interacts with EPF1, EPF2, EPFL4, EPFL5 and EPFL6. Interacts with SERK1, SERK2, SERK3/BAK1 and SERK4 in a EPF2-induced manner (PubMed:26320950). Interacts with EPFL9/STOMAGEN (PubMed:26083750).</text>
</comment>
<comment type="interaction">
    <interactant intactId="EBI-16940407">
        <id>Q42371</id>
    </interactant>
    <interactant intactId="EBI-617138">
        <id>Q94F62</id>
        <label>BAK1</label>
    </interactant>
    <organismsDiffer>false</organismsDiffer>
    <experiments>4</experiments>
</comment>
<comment type="interaction">
    <interactant intactId="EBI-16940407">
        <id>Q42371</id>
    </interactant>
    <interactant intactId="EBI-16895926">
        <id>Q6XAT2</id>
        <label>ERL2</label>
    </interactant>
    <organismsDiffer>false</organismsDiffer>
    <experiments>4</experiments>
</comment>
<comment type="interaction">
    <interactant intactId="EBI-16940407">
        <id>Q42371</id>
    </interactant>
    <interactant intactId="EBI-1799448">
        <id>Q9FL28</id>
        <label>FLS2</label>
    </interactant>
    <organismsDiffer>false</organismsDiffer>
    <experiments>2</experiments>
</comment>
<comment type="interaction">
    <interactant intactId="EBI-16940407">
        <id>Q42371</id>
    </interactant>
    <interactant intactId="EBI-16905069">
        <id>C0LGQ5</id>
        <label>GSO1</label>
    </interactant>
    <organismsDiffer>false</organismsDiffer>
    <experiments>3</experiments>
</comment>
<comment type="interaction">
    <interactant intactId="EBI-16940407">
        <id>Q42371</id>
    </interactant>
    <interactant intactId="EBI-16904927">
        <id>C0LGX3</id>
        <label>HSL2</label>
    </interactant>
    <organismsDiffer>false</organismsDiffer>
    <experiments>2</experiments>
</comment>
<comment type="interaction">
    <interactant intactId="EBI-16940407">
        <id>Q42371</id>
    </interactant>
    <interactant intactId="EBI-16924837">
        <id>Q9C8I6</id>
        <label>IOS1</label>
    </interactant>
    <organismsDiffer>false</organismsDiffer>
    <experiments>3</experiments>
</comment>
<comment type="interaction">
    <interactant intactId="EBI-16940407">
        <id>Q42371</id>
    </interactant>
    <interactant intactId="EBI-20651739">
        <id>Q9ZVD4</id>
        <label>LRR-RLK</label>
    </interactant>
    <organismsDiffer>false</organismsDiffer>
    <experiments>2</experiments>
</comment>
<comment type="interaction">
    <interactant intactId="EBI-16940407">
        <id>Q42371</id>
    </interactant>
    <interactant intactId="EBI-16146189">
        <id>Q9LFS4</id>
        <label>NIK1</label>
    </interactant>
    <organismsDiffer>false</organismsDiffer>
    <experiments>3</experiments>
</comment>
<comment type="interaction">
    <interactant intactId="EBI-16940407">
        <id>Q42371</id>
    </interactant>
    <interactant intactId="EBI-1238953">
        <id>Q9ZRF9</id>
        <label>RPK1</label>
    </interactant>
    <organismsDiffer>false</organismsDiffer>
    <experiments>3</experiments>
</comment>
<comment type="interaction">
    <interactant intactId="EBI-16940407">
        <id>Q42371</id>
    </interactant>
    <interactant intactId="EBI-6290483">
        <id>Q9SKG5</id>
        <label>SERK4</label>
    </interactant>
    <organismsDiffer>false</organismsDiffer>
    <experiments>2</experiments>
</comment>
<comment type="interaction">
    <interactant intactId="EBI-16940407">
        <id>Q42371</id>
    </interactant>
    <interactant intactId="EBI-16887868">
        <id>Q8LPS5</id>
        <label>SERK5</label>
    </interactant>
    <organismsDiffer>false</organismsDiffer>
    <experiments>3</experiments>
</comment>
<comment type="interaction">
    <interactant intactId="EBI-16940407">
        <id>Q42371</id>
    </interactant>
    <interactant intactId="EBI-20651925">
        <id>Q6R2K3</id>
        <label>SRF3</label>
    </interactant>
    <organismsDiffer>false</organismsDiffer>
    <experiments>2</experiments>
</comment>
<comment type="interaction">
    <interactant intactId="EBI-16940407">
        <id>Q42371</id>
    </interactant>
    <interactant intactId="EBI-17072125">
        <id>Q8RWZ1</id>
        <label>SUB</label>
    </interactant>
    <organismsDiffer>false</organismsDiffer>
    <experiments>3</experiments>
</comment>
<comment type="subcellular location">
    <subcellularLocation>
        <location evidence="25 29 36">Cell membrane</location>
        <topology evidence="37">Single-pass type I membrane protein</topology>
    </subcellularLocation>
</comment>
<comment type="tissue specificity">
    <text evidence="26 32 33">Mostly expressed in shoot apical meristems (SAM), organ primordia, flowers, siliques and young rosette leaves, and, to a lower extent, in stems and cauline leaves. Expressed in growing inflorescence stems and pedicels. Detected in epidermis, phloem and xylem.</text>
</comment>
<comment type="developmental stage">
    <text evidence="10 33">Strongly expressed in organ primordia and immature organs but weakly in mature organs. Observed in SAM at low levels during the vegetative growth with an increase at the transition to the reproductive growth phase. At the reproductive stage, localized in the young developing flowers. Expressed in inflorescence meristem and is up-regulated during flower initiation and formation of flower organs. Also found in cells that differentiate into pedicels.</text>
</comment>
<comment type="domain">
    <text evidence="25">The kinase domain is not required for ligand binding.</text>
</comment>
<comment type="polymorphism">
    <text>The cultivar Landsberg erecta (cv. Ler) derives from cv. Landsberg (cv. La-0) in which ERECTA is mutated at Ile-750 (variant er).</text>
</comment>
<comment type="disruption phenotype">
    <text evidence="20 32">In er-104 and er-105, small curly leaves and compact inflorescence with short thick siliques, increased canalization of rosette leaf number during long days.</text>
</comment>
<comment type="similarity">
    <text evidence="5">Belongs to the protein kinase superfamily. Ser/Thr protein kinase family.</text>
</comment>
<comment type="online information" name="Protein Spotlight">
    <link uri="https://www.proteinspotlight.org/back_issues/116"/>
    <text>A complicated affair - Issue 116 of April 2010</text>
</comment>
<dbReference type="EC" id="2.7.11.1"/>
<dbReference type="EMBL" id="D83257">
    <property type="protein sequence ID" value="BAA11869.1"/>
    <property type="molecule type" value="Genomic_DNA"/>
</dbReference>
<dbReference type="EMBL" id="U47029">
    <property type="protein sequence ID" value="AAC49302.1"/>
    <property type="molecule type" value="mRNA"/>
</dbReference>
<dbReference type="EMBL" id="AC004484">
    <property type="protein sequence ID" value="AAC14518.1"/>
    <property type="molecule type" value="Genomic_DNA"/>
</dbReference>
<dbReference type="EMBL" id="CP002685">
    <property type="protein sequence ID" value="AEC07825.1"/>
    <property type="molecule type" value="Genomic_DNA"/>
</dbReference>
<dbReference type="EMBL" id="AY035110">
    <property type="protein sequence ID" value="AAK59615.1"/>
    <property type="molecule type" value="mRNA"/>
</dbReference>
<dbReference type="EMBL" id="FJ708701">
    <property type="protein sequence ID" value="ACN59296.1"/>
    <property type="molecule type" value="mRNA"/>
</dbReference>
<dbReference type="EMBL" id="AK221886">
    <property type="protein sequence ID" value="BAD94220.1"/>
    <property type="molecule type" value="mRNA"/>
</dbReference>
<dbReference type="EMBL" id="EF598332">
    <property type="protein sequence ID" value="ABR08864.1"/>
    <property type="molecule type" value="Genomic_DNA"/>
</dbReference>
<dbReference type="EMBL" id="EF598333">
    <property type="protein sequence ID" value="ABR08865.1"/>
    <property type="molecule type" value="Genomic_DNA"/>
</dbReference>
<dbReference type="EMBL" id="EF598334">
    <property type="protein sequence ID" value="ABR08866.1"/>
    <property type="molecule type" value="Genomic_DNA"/>
</dbReference>
<dbReference type="EMBL" id="EF598335">
    <property type="protein sequence ID" value="ABR08867.1"/>
    <property type="molecule type" value="Genomic_DNA"/>
</dbReference>
<dbReference type="EMBL" id="EF598336">
    <property type="protein sequence ID" value="ABR08868.1"/>
    <property type="molecule type" value="Genomic_DNA"/>
</dbReference>
<dbReference type="EMBL" id="EF598337">
    <property type="protein sequence ID" value="ABR08869.1"/>
    <property type="molecule type" value="Genomic_DNA"/>
</dbReference>
<dbReference type="EMBL" id="EF598338">
    <property type="protein sequence ID" value="ABR08870.1"/>
    <property type="molecule type" value="Genomic_DNA"/>
</dbReference>
<dbReference type="EMBL" id="EF598339">
    <property type="protein sequence ID" value="ABR08871.1"/>
    <property type="molecule type" value="Genomic_DNA"/>
</dbReference>
<dbReference type="EMBL" id="EF598340">
    <property type="protein sequence ID" value="ABR08872.1"/>
    <property type="molecule type" value="Genomic_DNA"/>
</dbReference>
<dbReference type="EMBL" id="EF598341">
    <property type="protein sequence ID" value="ABR08873.1"/>
    <property type="molecule type" value="Genomic_DNA"/>
</dbReference>
<dbReference type="EMBL" id="EF598342">
    <property type="protein sequence ID" value="ABR08874.1"/>
    <property type="molecule type" value="Genomic_DNA"/>
</dbReference>
<dbReference type="EMBL" id="EF598343">
    <property type="protein sequence ID" value="ABR08875.1"/>
    <property type="molecule type" value="Genomic_DNA"/>
</dbReference>
<dbReference type="EMBL" id="EF598344">
    <property type="protein sequence ID" value="ABR08876.1"/>
    <property type="molecule type" value="Genomic_DNA"/>
</dbReference>
<dbReference type="EMBL" id="EF598345">
    <property type="protein sequence ID" value="ABR08877.1"/>
    <property type="molecule type" value="Genomic_DNA"/>
</dbReference>
<dbReference type="EMBL" id="EF598346">
    <property type="protein sequence ID" value="ABR08878.1"/>
    <property type="molecule type" value="Genomic_DNA"/>
</dbReference>
<dbReference type="EMBL" id="EF598347">
    <property type="protein sequence ID" value="ABR08879.1"/>
    <property type="molecule type" value="Genomic_DNA"/>
</dbReference>
<dbReference type="EMBL" id="EF598348">
    <property type="protein sequence ID" value="ABR08880.1"/>
    <property type="molecule type" value="Genomic_DNA"/>
</dbReference>
<dbReference type="EMBL" id="EF598349">
    <property type="protein sequence ID" value="ABR08881.1"/>
    <property type="molecule type" value="Genomic_DNA"/>
</dbReference>
<dbReference type="EMBL" id="EF598350">
    <property type="protein sequence ID" value="ABR08882.1"/>
    <property type="molecule type" value="Genomic_DNA"/>
</dbReference>
<dbReference type="EMBL" id="EF598351">
    <property type="protein sequence ID" value="ABR08883.1"/>
    <property type="molecule type" value="Genomic_DNA"/>
</dbReference>
<dbReference type="EMBL" id="EF598352">
    <property type="protein sequence ID" value="ABR08884.1"/>
    <property type="molecule type" value="Genomic_DNA"/>
</dbReference>
<dbReference type="EMBL" id="EF598353">
    <property type="protein sequence ID" value="ABR08885.1"/>
    <property type="molecule type" value="Genomic_DNA"/>
</dbReference>
<dbReference type="EMBL" id="EF598354">
    <property type="protein sequence ID" value="ABR08886.1"/>
    <property type="molecule type" value="Genomic_DNA"/>
</dbReference>
<dbReference type="PIR" id="B84659">
    <property type="entry name" value="B84659"/>
</dbReference>
<dbReference type="RefSeq" id="NP_180201.1">
    <property type="nucleotide sequence ID" value="NM_128190.3"/>
</dbReference>
<dbReference type="SMR" id="Q42371"/>
<dbReference type="BioGRID" id="2525">
    <property type="interactions" value="48"/>
</dbReference>
<dbReference type="FunCoup" id="Q42371">
    <property type="interactions" value="812"/>
</dbReference>
<dbReference type="IntAct" id="Q42371">
    <property type="interactions" value="57"/>
</dbReference>
<dbReference type="STRING" id="3702.Q42371"/>
<dbReference type="TCDB" id="1.A.87.2.11">
    <property type="family name" value="the mechanosensitive calcium channel (mca) family"/>
</dbReference>
<dbReference type="GlyCosmos" id="Q42371">
    <property type="glycosylation" value="11 sites, No reported glycans"/>
</dbReference>
<dbReference type="GlyGen" id="Q42371">
    <property type="glycosylation" value="11 sites"/>
</dbReference>
<dbReference type="iPTMnet" id="Q42371"/>
<dbReference type="PaxDb" id="3702-AT2G26330.1"/>
<dbReference type="ProteomicsDB" id="221805"/>
<dbReference type="EnsemblPlants" id="AT2G26330.1">
    <property type="protein sequence ID" value="AT2G26330.1"/>
    <property type="gene ID" value="AT2G26330"/>
</dbReference>
<dbReference type="GeneID" id="817173"/>
<dbReference type="Gramene" id="AT2G26330.1">
    <property type="protein sequence ID" value="AT2G26330.1"/>
    <property type="gene ID" value="AT2G26330"/>
</dbReference>
<dbReference type="KEGG" id="ath:AT2G26330"/>
<dbReference type="Araport" id="AT2G26330"/>
<dbReference type="TAIR" id="AT2G26330">
    <property type="gene designation" value="ER"/>
</dbReference>
<dbReference type="eggNOG" id="ENOG502QTEP">
    <property type="taxonomic scope" value="Eukaryota"/>
</dbReference>
<dbReference type="HOGENOM" id="CLU_000288_22_1_1"/>
<dbReference type="InParanoid" id="Q42371"/>
<dbReference type="OMA" id="RYCSWRG"/>
<dbReference type="OrthoDB" id="676979at2759"/>
<dbReference type="PhylomeDB" id="Q42371"/>
<dbReference type="PRO" id="PR:Q42371"/>
<dbReference type="Proteomes" id="UP000006548">
    <property type="component" value="Chromosome 2"/>
</dbReference>
<dbReference type="ExpressionAtlas" id="Q42371">
    <property type="expression patterns" value="baseline and differential"/>
</dbReference>
<dbReference type="GO" id="GO:0005739">
    <property type="term" value="C:mitochondrion"/>
    <property type="evidence" value="ECO:0007005"/>
    <property type="project" value="TAIR"/>
</dbReference>
<dbReference type="GO" id="GO:0005886">
    <property type="term" value="C:plasma membrane"/>
    <property type="evidence" value="ECO:0000314"/>
    <property type="project" value="UniProtKB"/>
</dbReference>
<dbReference type="GO" id="GO:0005524">
    <property type="term" value="F:ATP binding"/>
    <property type="evidence" value="ECO:0007669"/>
    <property type="project" value="UniProtKB-KW"/>
</dbReference>
<dbReference type="GO" id="GO:0042277">
    <property type="term" value="F:peptide binding"/>
    <property type="evidence" value="ECO:0000353"/>
    <property type="project" value="TAIR"/>
</dbReference>
<dbReference type="GO" id="GO:0106310">
    <property type="term" value="F:protein serine kinase activity"/>
    <property type="evidence" value="ECO:0007669"/>
    <property type="project" value="RHEA"/>
</dbReference>
<dbReference type="GO" id="GO:0004674">
    <property type="term" value="F:protein serine/threonine kinase activity"/>
    <property type="evidence" value="ECO:0000314"/>
    <property type="project" value="UniProtKB"/>
</dbReference>
<dbReference type="GO" id="GO:0033612">
    <property type="term" value="F:receptor serine/threonine kinase binding"/>
    <property type="evidence" value="ECO:0000353"/>
    <property type="project" value="UniProtKB"/>
</dbReference>
<dbReference type="GO" id="GO:0005102">
    <property type="term" value="F:signaling receptor binding"/>
    <property type="evidence" value="ECO:0000353"/>
    <property type="project" value="UniProtKB"/>
</dbReference>
<dbReference type="GO" id="GO:0019199">
    <property type="term" value="F:transmembrane receptor protein kinase activity"/>
    <property type="evidence" value="ECO:0000250"/>
    <property type="project" value="TAIR"/>
</dbReference>
<dbReference type="GO" id="GO:0070370">
    <property type="term" value="P:cellular heat acclimation"/>
    <property type="evidence" value="ECO:0000315"/>
    <property type="project" value="TAIR"/>
</dbReference>
<dbReference type="GO" id="GO:0042742">
    <property type="term" value="P:defense response to bacterium"/>
    <property type="evidence" value="ECO:0000315"/>
    <property type="project" value="UniProtKB"/>
</dbReference>
<dbReference type="GO" id="GO:0050832">
    <property type="term" value="P:defense response to fungus"/>
    <property type="evidence" value="ECO:0000315"/>
    <property type="project" value="TAIR"/>
</dbReference>
<dbReference type="GO" id="GO:0048281">
    <property type="term" value="P:inflorescence morphogenesis"/>
    <property type="evidence" value="ECO:0000315"/>
    <property type="project" value="UniProtKB"/>
</dbReference>
<dbReference type="GO" id="GO:0009965">
    <property type="term" value="P:leaf morphogenesis"/>
    <property type="evidence" value="ECO:0000315"/>
    <property type="project" value="TAIR"/>
</dbReference>
<dbReference type="GO" id="GO:0010087">
    <property type="term" value="P:phloem or xylem histogenesis"/>
    <property type="evidence" value="ECO:0000315"/>
    <property type="project" value="TAIR"/>
</dbReference>
<dbReference type="GO" id="GO:0009664">
    <property type="term" value="P:plant-type cell wall organization"/>
    <property type="evidence" value="ECO:0000315"/>
    <property type="project" value="UniProtKB"/>
</dbReference>
<dbReference type="GO" id="GO:0009944">
    <property type="term" value="P:polarity specification of adaxial/abaxial axis"/>
    <property type="evidence" value="ECO:0000315"/>
    <property type="project" value="UniProtKB"/>
</dbReference>
<dbReference type="GO" id="GO:0030155">
    <property type="term" value="P:regulation of cell adhesion"/>
    <property type="evidence" value="ECO:0000315"/>
    <property type="project" value="TAIR"/>
</dbReference>
<dbReference type="GO" id="GO:0051302">
    <property type="term" value="P:regulation of cell division"/>
    <property type="evidence" value="ECO:0000315"/>
    <property type="project" value="TAIR"/>
</dbReference>
<dbReference type="GO" id="GO:0001558">
    <property type="term" value="P:regulation of cell growth"/>
    <property type="evidence" value="ECO:0000315"/>
    <property type="project" value="TAIR"/>
</dbReference>
<dbReference type="GO" id="GO:1905421">
    <property type="term" value="P:regulation of plant organ morphogenesis"/>
    <property type="evidence" value="ECO:0000315"/>
    <property type="project" value="TAIR"/>
</dbReference>
<dbReference type="GO" id="GO:0010103">
    <property type="term" value="P:stomatal complex morphogenesis"/>
    <property type="evidence" value="ECO:0000315"/>
    <property type="project" value="TAIR"/>
</dbReference>
<dbReference type="GO" id="GO:0010148">
    <property type="term" value="P:transpiration"/>
    <property type="evidence" value="ECO:0000315"/>
    <property type="project" value="UniProtKB"/>
</dbReference>
<dbReference type="CDD" id="cd14066">
    <property type="entry name" value="STKc_IRAK"/>
    <property type="match status" value="1"/>
</dbReference>
<dbReference type="FunFam" id="1.10.510.10:FF:000290">
    <property type="entry name" value="LRR receptor-like serine/threonine-protein kinase ERECTA"/>
    <property type="match status" value="1"/>
</dbReference>
<dbReference type="FunFam" id="3.30.200.20:FF:000288">
    <property type="entry name" value="LRR receptor-like serine/threonine-protein kinase ERECTA"/>
    <property type="match status" value="1"/>
</dbReference>
<dbReference type="FunFam" id="3.80.10.10:FF:000077">
    <property type="entry name" value="LRR receptor-like serine/threonine-protein kinase ERL1"/>
    <property type="match status" value="1"/>
</dbReference>
<dbReference type="FunFam" id="3.80.10.10:FF:000107">
    <property type="entry name" value="LRR receptor-like serine/threonine-protein kinase ERL1"/>
    <property type="match status" value="1"/>
</dbReference>
<dbReference type="FunFam" id="3.80.10.10:FF:000219">
    <property type="entry name" value="LRR receptor-like serine/threonine-protein kinase ERL1"/>
    <property type="match status" value="1"/>
</dbReference>
<dbReference type="Gene3D" id="3.30.200.20">
    <property type="entry name" value="Phosphorylase Kinase, domain 1"/>
    <property type="match status" value="1"/>
</dbReference>
<dbReference type="Gene3D" id="3.80.10.10">
    <property type="entry name" value="Ribonuclease Inhibitor"/>
    <property type="match status" value="3"/>
</dbReference>
<dbReference type="Gene3D" id="1.10.510.10">
    <property type="entry name" value="Transferase(Phosphotransferase) domain 1"/>
    <property type="match status" value="1"/>
</dbReference>
<dbReference type="InterPro" id="IPR011009">
    <property type="entry name" value="Kinase-like_dom_sf"/>
</dbReference>
<dbReference type="InterPro" id="IPR001611">
    <property type="entry name" value="Leu-rich_rpt"/>
</dbReference>
<dbReference type="InterPro" id="IPR003591">
    <property type="entry name" value="Leu-rich_rpt_typical-subtyp"/>
</dbReference>
<dbReference type="InterPro" id="IPR032675">
    <property type="entry name" value="LRR_dom_sf"/>
</dbReference>
<dbReference type="InterPro" id="IPR013210">
    <property type="entry name" value="LRR_N_plant-typ"/>
</dbReference>
<dbReference type="InterPro" id="IPR050647">
    <property type="entry name" value="Plant_LRR-RLKs"/>
</dbReference>
<dbReference type="InterPro" id="IPR000719">
    <property type="entry name" value="Prot_kinase_dom"/>
</dbReference>
<dbReference type="InterPro" id="IPR017441">
    <property type="entry name" value="Protein_kinase_ATP_BS"/>
</dbReference>
<dbReference type="InterPro" id="IPR008271">
    <property type="entry name" value="Ser/Thr_kinase_AS"/>
</dbReference>
<dbReference type="PANTHER" id="PTHR48056">
    <property type="entry name" value="LRR RECEPTOR-LIKE SERINE/THREONINE-PROTEIN KINASE-RELATED"/>
    <property type="match status" value="1"/>
</dbReference>
<dbReference type="PANTHER" id="PTHR48056:SF6">
    <property type="entry name" value="LRR RECEPTOR-LIKE SERINE_THREONINE-PROTEIN KINASE ERECTA"/>
    <property type="match status" value="1"/>
</dbReference>
<dbReference type="Pfam" id="PF00560">
    <property type="entry name" value="LRR_1"/>
    <property type="match status" value="7"/>
</dbReference>
<dbReference type="Pfam" id="PF13855">
    <property type="entry name" value="LRR_8"/>
    <property type="match status" value="3"/>
</dbReference>
<dbReference type="Pfam" id="PF08263">
    <property type="entry name" value="LRRNT_2"/>
    <property type="match status" value="1"/>
</dbReference>
<dbReference type="Pfam" id="PF00069">
    <property type="entry name" value="Pkinase"/>
    <property type="match status" value="1"/>
</dbReference>
<dbReference type="SMART" id="SM00369">
    <property type="entry name" value="LRR_TYP"/>
    <property type="match status" value="8"/>
</dbReference>
<dbReference type="SMART" id="SM00220">
    <property type="entry name" value="S_TKc"/>
    <property type="match status" value="1"/>
</dbReference>
<dbReference type="SUPFAM" id="SSF52058">
    <property type="entry name" value="L domain-like"/>
    <property type="match status" value="2"/>
</dbReference>
<dbReference type="SUPFAM" id="SSF56112">
    <property type="entry name" value="Protein kinase-like (PK-like)"/>
    <property type="match status" value="1"/>
</dbReference>
<dbReference type="PROSITE" id="PS51450">
    <property type="entry name" value="LRR"/>
    <property type="match status" value="17"/>
</dbReference>
<dbReference type="PROSITE" id="PS00107">
    <property type="entry name" value="PROTEIN_KINASE_ATP"/>
    <property type="match status" value="1"/>
</dbReference>
<dbReference type="PROSITE" id="PS50011">
    <property type="entry name" value="PROTEIN_KINASE_DOM"/>
    <property type="match status" value="1"/>
</dbReference>
<dbReference type="PROSITE" id="PS00108">
    <property type="entry name" value="PROTEIN_KINASE_ST"/>
    <property type="match status" value="1"/>
</dbReference>
<accession>Q42371</accession>
<accession>A5YYA0</accession>
<accession>A5YYB1</accession>
<accession>Q56WZ3</accession>
<sequence>MALFRDIVLLGFLFCLSLVATVTSEEGATLLEIKKSFKDVNNVLYDWTTSPSSDYCVWRGVSCENVTFNVVALNLSDLNLDGEISPAIGDLKSLLSIDLRGNRLSGQIPDEIGDCSSLQNLDLSFNELSGDIPFSISKLKQLEQLILKNNQLIGPIPSTLSQIPNLKILDLAQNKLSGEIPRLIYWNEVLQYLGLRGNNLVGNISPDLCQLTGLWYFDVRNNSLTGSIPETIGNCTAFQVLDLSYNQLTGEIPFDIGFLQVATLSLQGNQLSGKIPSVIGLMQALAVLDLSGNLLSGSIPPILGNLTFTEKLYLHSNKLTGSIPPELGNMSKLHYLELNDNHLTGHIPPELGKLTDLFDLNVANNDLEGPIPDHLSSCTNLNSLNVHGNKFSGTIPRAFQKLESMTYLNLSSNNIKGPIPVELSRIGNLDTLDLSNNKINGIIPSSLGDLEHLLKMNLSRNHITGVVPGDFGNLRSIMEIDLSNNDISGPIPEELNQLQNIILLRLENNNLTGNVGSLANCLSLTVLNVSHNNLVGDIPKNNNFSRFSPDSFIGNPGLCGSWLNSPCHDSRRTVRVSISRAAILGIAIGGLVILLMVLIAACRPHNPPPFLDGSLDKPVTYSTPKLVILHMNMALHVYEDIMRMTENLSEKYIIGHGASSTVYKCVLKNCKPVAIKRLYSHNPQSMKQFETELEMLSSIKHRNLVSLQAYSLSHLGSLLFYDYLENGSLWDLLHGPTKKKTLDWDTRLKIAYGAAQGLAYLHHDCSPRIIHRDVKSSNILLDKDLEARLTDFGIAKSLCVSKSHTSTYVMGTIGYIDPEYARTSRLTEKSDVYSYGIVLLELLTRRKAVDDESNLHHLIMSKTGNNEVMEMADPDITSTCKDLGVVKKVFQLALLCTKRQPNDRPTMHQVTRVLGSFMLSEQPPAATDTSATLAGSCYVDEYANLKTPHSVNCSSMSASDAQLFLRFGQVISQNSE</sequence>
<name>ERECT_ARATH</name>
<reference key="1">
    <citation type="journal article" date="1996" name="Plant Cell">
        <title>The Arabidopsis ERECTA gene encodes a putative receptor protein kinase with extracellular leucine-rich repeats.</title>
        <authorList>
            <person name="Torii K.U."/>
            <person name="Mitsukawa N."/>
            <person name="Oosumi T."/>
            <person name="Matsuura Y."/>
            <person name="Yokoyama R."/>
            <person name="Whittier R.F."/>
            <person name="Komeda Y."/>
        </authorList>
    </citation>
    <scope>NUCLEOTIDE SEQUENCE [GENOMIC DNA / MRNA]</scope>
    <scope>VARIANT ER-1 LYS-750</scope>
    <scope>FUNCTION</scope>
    <scope>DISRUPTION PHENOTYPE</scope>
    <scope>TISSUE SPECIFICITY</scope>
    <scope>MUTAGENESIS OF MET-282</scope>
    <scope>SUBCELLULAR LOCATION</scope>
    <source>
        <strain>cv. Columbia</strain>
        <strain>cv. Landsberg erecta</strain>
    </source>
</reference>
<reference key="2">
    <citation type="journal article" date="1999" name="Nature">
        <title>Sequence and analysis of chromosome 2 of the plant Arabidopsis thaliana.</title>
        <authorList>
            <person name="Lin X."/>
            <person name="Kaul S."/>
            <person name="Rounsley S.D."/>
            <person name="Shea T.P."/>
            <person name="Benito M.-I."/>
            <person name="Town C.D."/>
            <person name="Fujii C.Y."/>
            <person name="Mason T.M."/>
            <person name="Bowman C.L."/>
            <person name="Barnstead M.E."/>
            <person name="Feldblyum T.V."/>
            <person name="Buell C.R."/>
            <person name="Ketchum K.A."/>
            <person name="Lee J.J."/>
            <person name="Ronning C.M."/>
            <person name="Koo H.L."/>
            <person name="Moffat K.S."/>
            <person name="Cronin L.A."/>
            <person name="Shen M."/>
            <person name="Pai G."/>
            <person name="Van Aken S."/>
            <person name="Umayam L."/>
            <person name="Tallon L.J."/>
            <person name="Gill J.E."/>
            <person name="Adams M.D."/>
            <person name="Carrera A.J."/>
            <person name="Creasy T.H."/>
            <person name="Goodman H.M."/>
            <person name="Somerville C.R."/>
            <person name="Copenhaver G.P."/>
            <person name="Preuss D."/>
            <person name="Nierman W.C."/>
            <person name="White O."/>
            <person name="Eisen J.A."/>
            <person name="Salzberg S.L."/>
            <person name="Fraser C.M."/>
            <person name="Venter J.C."/>
        </authorList>
    </citation>
    <scope>NUCLEOTIDE SEQUENCE [LARGE SCALE GENOMIC DNA]</scope>
    <source>
        <strain>cv. Columbia</strain>
    </source>
</reference>
<reference key="3">
    <citation type="journal article" date="2017" name="Plant J.">
        <title>Araport11: a complete reannotation of the Arabidopsis thaliana reference genome.</title>
        <authorList>
            <person name="Cheng C.Y."/>
            <person name="Krishnakumar V."/>
            <person name="Chan A.P."/>
            <person name="Thibaud-Nissen F."/>
            <person name="Schobel S."/>
            <person name="Town C.D."/>
        </authorList>
    </citation>
    <scope>GENOME REANNOTATION</scope>
    <source>
        <strain>cv. Columbia</strain>
    </source>
</reference>
<reference key="4">
    <citation type="journal article" date="2003" name="Science">
        <title>Empirical analysis of transcriptional activity in the Arabidopsis genome.</title>
        <authorList>
            <person name="Yamada K."/>
            <person name="Lim J."/>
            <person name="Dale J.M."/>
            <person name="Chen H."/>
            <person name="Shinn P."/>
            <person name="Palm C.J."/>
            <person name="Southwick A.M."/>
            <person name="Wu H.C."/>
            <person name="Kim C.J."/>
            <person name="Nguyen M."/>
            <person name="Pham P.K."/>
            <person name="Cheuk R.F."/>
            <person name="Karlin-Newmann G."/>
            <person name="Liu S.X."/>
            <person name="Lam B."/>
            <person name="Sakano H."/>
            <person name="Wu T."/>
            <person name="Yu G."/>
            <person name="Miranda M."/>
            <person name="Quach H.L."/>
            <person name="Tripp M."/>
            <person name="Chang C.H."/>
            <person name="Lee J.M."/>
            <person name="Toriumi M.J."/>
            <person name="Chan M.M."/>
            <person name="Tang C.C."/>
            <person name="Onodera C.S."/>
            <person name="Deng J.M."/>
            <person name="Akiyama K."/>
            <person name="Ansari Y."/>
            <person name="Arakawa T."/>
            <person name="Banh J."/>
            <person name="Banno F."/>
            <person name="Bowser L."/>
            <person name="Brooks S.Y."/>
            <person name="Carninci P."/>
            <person name="Chao Q."/>
            <person name="Choy N."/>
            <person name="Enju A."/>
            <person name="Goldsmith A.D."/>
            <person name="Gurjal M."/>
            <person name="Hansen N.F."/>
            <person name="Hayashizaki Y."/>
            <person name="Johnson-Hopson C."/>
            <person name="Hsuan V.W."/>
            <person name="Iida K."/>
            <person name="Karnes M."/>
            <person name="Khan S."/>
            <person name="Koesema E."/>
            <person name="Ishida J."/>
            <person name="Jiang P.X."/>
            <person name="Jones T."/>
            <person name="Kawai J."/>
            <person name="Kamiya A."/>
            <person name="Meyers C."/>
            <person name="Nakajima M."/>
            <person name="Narusaka M."/>
            <person name="Seki M."/>
            <person name="Sakurai T."/>
            <person name="Satou M."/>
            <person name="Tamse R."/>
            <person name="Vaysberg M."/>
            <person name="Wallender E.K."/>
            <person name="Wong C."/>
            <person name="Yamamura Y."/>
            <person name="Yuan S."/>
            <person name="Shinozaki K."/>
            <person name="Davis R.W."/>
            <person name="Theologis A."/>
            <person name="Ecker J.R."/>
        </authorList>
    </citation>
    <scope>NUCLEOTIDE SEQUENCE [LARGE SCALE MRNA]</scope>
    <source>
        <strain>cv. Columbia</strain>
    </source>
</reference>
<reference key="5">
    <citation type="journal article" date="2010" name="BMC Genomics">
        <title>Genome-wide cloning and sequence analysis of leucine-rich repeat receptor-like protein kinase genes in Arabidopsis thaliana.</title>
        <authorList>
            <person name="Gou X."/>
            <person name="He K."/>
            <person name="Yang H."/>
            <person name="Yuan T."/>
            <person name="Lin H."/>
            <person name="Clouse S.D."/>
            <person name="Li J."/>
        </authorList>
    </citation>
    <scope>NUCLEOTIDE SEQUENCE [LARGE SCALE MRNA]</scope>
    <source>
        <strain>cv. Columbia</strain>
    </source>
</reference>
<reference key="6">
    <citation type="submission" date="2005-03" db="EMBL/GenBank/DDBJ databases">
        <title>Large-scale analysis of RIKEN Arabidopsis full-length (RAFL) cDNAs.</title>
        <authorList>
            <person name="Totoki Y."/>
            <person name="Seki M."/>
            <person name="Ishida J."/>
            <person name="Nakajima M."/>
            <person name="Enju A."/>
            <person name="Kamiya A."/>
            <person name="Narusaka M."/>
            <person name="Shin-i T."/>
            <person name="Nakagawa M."/>
            <person name="Sakamoto N."/>
            <person name="Oishi K."/>
            <person name="Kohara Y."/>
            <person name="Kobayashi M."/>
            <person name="Toyoda A."/>
            <person name="Sakaki Y."/>
            <person name="Sakurai T."/>
            <person name="Iida K."/>
            <person name="Akiyama K."/>
            <person name="Satou M."/>
            <person name="Toyoda T."/>
            <person name="Konagaya A."/>
            <person name="Carninci P."/>
            <person name="Kawai J."/>
            <person name="Hayashizaki Y."/>
            <person name="Shinozaki K."/>
        </authorList>
    </citation>
    <scope>NUCLEOTIDE SEQUENCE [LARGE SCALE MRNA] OF 536-976</scope>
    <source>
        <strain>cv. Columbia</strain>
    </source>
</reference>
<reference key="7">
    <citation type="journal article" date="2007" name="Genetics">
        <title>The genetic architecture of shoot branching in Arabidopsis thaliana: a comparative assessment of candidate gene associations vs. quantitative trait locus mapping.</title>
        <authorList>
            <person name="Ehrenreich I.M."/>
            <person name="Stafford P.A."/>
            <person name="Purugganan M.D."/>
        </authorList>
    </citation>
    <scope>NUCLEOTIDE SEQUENCE [GENOMIC DNA] OF 791-935</scope>
    <scope>VARIANT MET-886</scope>
    <source>
        <strain>cv. Ag-0</strain>
        <strain>cv. An-1</strain>
        <strain>cv. Br-0</strain>
        <strain>cv. C24</strain>
        <strain>cv. Ct-1</strain>
        <strain>cv. Cvi-1</strain>
        <strain>cv. Edi-0</strain>
        <strain>cv. Ga-0</strain>
        <strain>cv. Kas-2</strain>
        <strain>cv. Kin-0</strain>
        <strain>cv. Landsberg erecta</strain>
        <strain>cv. Ll-0</strain>
        <strain>cv. Lz-0</strain>
        <strain>cv. Mt-0</strain>
        <strain>cv. Nd-1</strain>
        <strain>cv. Nok-3</strain>
        <strain>cv. Oy-0</strain>
        <strain>cv. Se-0</strain>
        <strain>cv. Sorbo</strain>
        <strain>cv. Tsu-1</strain>
        <strain>cv. Van-0</strain>
        <strain>cv. Wa-1</strain>
        <strain>cv. Wassilewskija</strain>
    </source>
</reference>
<reference key="8">
    <citation type="journal article" date="1998" name="Plant J.">
        <title>The Arabidopsis ERECTA gene is expressed in the shoot apical meristem and organ primordia.</title>
        <authorList>
            <person name="Yokoyama R."/>
            <person name="Takahashi T."/>
            <person name="Kato A."/>
            <person name="Torii K.U."/>
            <person name="Komeda Y."/>
        </authorList>
    </citation>
    <scope>TISSUE SPECIFICITY</scope>
    <scope>DEVELOPMENTAL STAGE</scope>
</reference>
<reference key="9">
    <citation type="journal article" date="2001" name="New Phytol.">
        <title>Receptor serine/threonine protein kinases in signalling: analysis of the erecta receptor-like kinase of Arabidopsis thaliana.</title>
        <authorList>
            <person name="Lease K.A."/>
            <person name="Lau N.Y."/>
            <person name="Schuster R.A."/>
            <person name="Torii K.U."/>
            <person name="Walker J.C."/>
        </authorList>
    </citation>
    <scope>FUNCTION</scope>
    <scope>CHARACTERIZATION OF VARIANT ER-1 LYS-750</scope>
    <scope>MUTAGENESIS OF GLY-489 AND ASP-831</scope>
</reference>
<reference key="10">
    <citation type="journal article" date="2002" name="Plant Cell">
        <title>KNAT1 and ERECTA regulate inflorescence architecture in Arabidopsis.</title>
        <authorList>
            <person name="Douglas S.J."/>
            <person name="Chuck G."/>
            <person name="Dengler R.E."/>
            <person name="Pelecanda L."/>
            <person name="Riggs C.D."/>
        </authorList>
    </citation>
    <scope>FUNCTION</scope>
</reference>
<reference key="11">
    <citation type="journal article" date="2003" name="Development">
        <title>Novel as1 and as2 defects in leaf adaxial-abaxial polarity reveal the requirement for ASYMMETRIC LEAVES1 and 2 and ERECTA functions in specifying leaf adaxial identity.</title>
        <authorList>
            <person name="Xu L."/>
            <person name="Xu Y."/>
            <person name="Dong A."/>
            <person name="Sun Y."/>
            <person name="Pi L."/>
            <person name="Xu Y."/>
            <person name="Huang H."/>
        </authorList>
    </citation>
    <scope>FUNCTION</scope>
</reference>
<reference key="12">
    <citation type="journal article" date="2003" name="Plant J.">
        <title>ERECTA, an LRR receptor-like kinase protein controlling development pleiotropically affects resistance to bacterial wilt.</title>
        <authorList>
            <person name="Godiard L."/>
            <person name="Sauviac L."/>
            <person name="Torii K.U."/>
            <person name="Grenon O."/>
            <person name="Mangin B."/>
            <person name="Grimsley N.H."/>
            <person name="Marco Y."/>
        </authorList>
    </citation>
    <scope>FUNCTION</scope>
    <scope>VARIANT ER-1 LYS-750</scope>
</reference>
<reference key="13">
    <citation type="journal article" date="2004" name="Development">
        <title>Synergistic interaction of three ERECTA-family receptor-like kinases controls Arabidopsis organ growth and flower development by promoting cell proliferation.</title>
        <authorList>
            <person name="Shpak E.D."/>
            <person name="Berthiaume C.T."/>
            <person name="Hill E.J."/>
            <person name="Torii K.U."/>
        </authorList>
    </citation>
    <scope>FUNCTION</scope>
    <scope>DEVELOPMENTAL STAGE</scope>
</reference>
<reference key="14">
    <citation type="journal article" date="2004" name="Planta">
        <title>ERECTA is required for protection against heat-stress in the AS1/ AS2 pathway to regulate adaxial-abaxial leaf polarity in Arabidopsis.</title>
        <authorList>
            <person name="Qi Y."/>
            <person name="Sun Y."/>
            <person name="Xu L."/>
            <person name="Xu Y."/>
            <person name="Huang H."/>
        </authorList>
    </citation>
    <scope>FUNCTION</scope>
</reference>
<reference key="15">
    <citation type="journal article" date="2005" name="Dev. Biol.">
        <title>Pedicel development in Arabidopsis thaliana: contribution of vascular positioning and the role of the BREVIPEDICELLUS and ERECTA genes.</title>
        <authorList>
            <person name="Douglas S.J."/>
            <person name="Riggs C.D."/>
        </authorList>
    </citation>
    <scope>FUNCTION</scope>
</reference>
<reference key="16">
    <citation type="journal article" date="2005" name="Nature">
        <title>The ERECTA gene regulates plant transpiration efficiency in Arabidopsis.</title>
        <authorList>
            <person name="Masle J."/>
            <person name="Gilmore S.R."/>
            <person name="Farquhar G.D."/>
        </authorList>
    </citation>
    <scope>FUNCTION</scope>
</reference>
<reference key="17">
    <citation type="journal article" date="2005" name="Plant J.">
        <title>ERECTA receptor-like kinase and heterotrimeric G protein from Arabidopsis are required for resistance to the necrotrophic fungus Plectosphaerella cucumerina.</title>
        <authorList>
            <person name="Llorente F."/>
            <person name="Alonso-Blanco C."/>
            <person name="Sanchez-Rodriguez C."/>
            <person name="Jorda L."/>
            <person name="Molina A."/>
        </authorList>
    </citation>
    <scope>FUNCTION</scope>
    <scope>MUTAGENESIS OF GLY-489 AND ASP-831</scope>
    <scope>VARIANT ER-1 LYS-750</scope>
</reference>
<reference key="18">
    <citation type="journal article" date="2005" name="Plant Physiol.">
        <title>Interaction of auxin and ERECTA in elaborating Arabidopsis inflorescence architecture revealed by the activation tagging of a new member of the YUCCA family putative flavin monooxygenases.</title>
        <authorList>
            <person name="Woodward C."/>
            <person name="Bemis S.M."/>
            <person name="Hill E.J."/>
            <person name="Sawa S."/>
            <person name="Koshiba T."/>
            <person name="Torii K.U."/>
        </authorList>
    </citation>
    <scope>FUNCTION</scope>
    <scope>MUTAGENESIS OF MET-282</scope>
</reference>
<reference key="19">
    <citation type="journal article" date="2005" name="Science">
        <title>Stomatal patterning and differentiation by synergistic interactions of receptor kinases.</title>
        <authorList>
            <person name="Shpak E.D."/>
            <person name="McAbee J.M."/>
            <person name="Pillitteri L.J."/>
            <person name="Torii K.U."/>
        </authorList>
    </citation>
    <scope>FUNCTION</scope>
</reference>
<reference key="20">
    <citation type="journal article" date="2007" name="Development">
        <title>Haploinsufficiency after successive loss of signaling reveals a role for ERECTA-family genes in Arabidopsis ovule development.</title>
        <authorList>
            <person name="Pillitteri L.J."/>
            <person name="Bemis S.M."/>
            <person name="Shpak E.D."/>
            <person name="Torii K.U."/>
        </authorList>
    </citation>
    <scope>FUNCTION</scope>
</reference>
<reference key="21">
    <citation type="journal article" date="2007" name="Plant Cell">
        <title>ABA is an essential signal for plant resistance to pathogens affecting JA biosynthesis and the activation of defenses in Arabidopsis.</title>
        <authorList>
            <person name="Adie B.A.T."/>
            <person name="Perez-Perez J."/>
            <person name="Perez-Perez M.M."/>
            <person name="Godoy M."/>
            <person name="Sanchez-Serrano J.-J."/>
            <person name="Schmelz E.A."/>
            <person name="Solano R."/>
        </authorList>
    </citation>
    <scope>FUNCTION</scope>
    <scope>VARIANT ER-1 LYS-750</scope>
</reference>
<reference key="22">
    <citation type="journal article" date="2007" name="Proc. Natl. Acad. Sci. U.S.A.">
        <title>Genetics of microenvironmental canalization in Arabidopsis thaliana.</title>
        <authorList>
            <person name="Hall M.C."/>
            <person name="Dworkin I."/>
            <person name="Ungerer M.C."/>
            <person name="Purugganan M."/>
        </authorList>
    </citation>
    <scope>FUNCTION</scope>
    <scope>DISRUPTION PHENOTYPE</scope>
</reference>
<reference key="23">
    <citation type="journal article" date="2009" name="Genetics">
        <title>Polymorphic genes of major effect: consequences for variation, selection and evolution in Arabidopsis thaliana.</title>
        <authorList>
            <person name="Stinchcombe J.R."/>
            <person name="Weinig C."/>
            <person name="Heath K.D."/>
            <person name="Brock M.T."/>
            <person name="Schmitt J."/>
        </authorList>
    </citation>
    <scope>FUNCTION</scope>
</reference>
<reference key="24">
    <citation type="journal article" date="2009" name="J. Exp. Bot.">
        <title>A strong effect of growth medium and organ type on the identification of QTLs for phytate and mineral concentrations in three Arabidopsis thaliana RIL populations.</title>
        <authorList>
            <person name="Ghandilyan A."/>
            <person name="Ilk N."/>
            <person name="Hanhart C."/>
            <person name="Mbengue M."/>
            <person name="Barboza L."/>
            <person name="Schat H."/>
            <person name="Koornneef M."/>
            <person name="El-Lithy M."/>
            <person name="Vreugdenhil D."/>
            <person name="Reymond M."/>
            <person name="Aarts M.G.M."/>
        </authorList>
    </citation>
    <scope>FUNCTION</scope>
</reference>
<reference key="25">
    <citation type="journal article" date="2009" name="Mol. Plant Microbe Interact.">
        <title>The ERECTA receptor-like kinase regulates cell wall-mediated resistance to pathogens in Arabidopsis thaliana.</title>
        <authorList>
            <person name="Sanchez-Rodriguez C."/>
            <person name="Estevez J.M."/>
            <person name="Llorente F."/>
            <person name="Hernandez-Blanco C."/>
            <person name="Jorda L."/>
            <person name="Pagan I."/>
            <person name="Berrocal M."/>
            <person name="Marco Y."/>
            <person name="Somerville S."/>
            <person name="Molina A."/>
        </authorList>
    </citation>
    <scope>FUNCTION</scope>
    <scope>VARIANT ER-1 LYS-750</scope>
</reference>
<reference key="26">
    <citation type="journal article" date="2009" name="Trends Plant Sci.">
        <title>The many functions of ERECTA.</title>
        <authorList>
            <person name="van Zanten M."/>
            <person name="Snoek L.B."/>
            <person name="Proveniers M.C.G."/>
            <person name="Peeters A.J.M."/>
        </authorList>
    </citation>
    <scope>REVIEW</scope>
</reference>
<reference key="27">
    <citation type="journal article" date="2011" name="Plant Cell">
        <title>Generation of signaling specificity in Arabidopsis by spatially restricted buffering of ligand-receptor interactions.</title>
        <authorList>
            <person name="Abrash E.B."/>
            <person name="Davies K.A."/>
            <person name="Bergmann D.C."/>
        </authorList>
    </citation>
    <scope>INTERACTION WITH EPFL5</scope>
</reference>
<reference key="28">
    <citation type="journal article" date="2012" name="Genes Dev.">
        <title>Direct interaction of ligand-receptor pairs specifying stomatal patterning.</title>
        <authorList>
            <person name="Lee J.S."/>
            <person name="Kuroha T."/>
            <person name="Hnilova M."/>
            <person name="Khatayevich D."/>
            <person name="Kanaoka M.M."/>
            <person name="McAbee J.M."/>
            <person name="Sarikaya M."/>
            <person name="Tamerler C."/>
            <person name="Torii K.U."/>
        </authorList>
    </citation>
    <scope>FUNCTION</scope>
    <scope>SUBCELLULAR LOCATION</scope>
    <scope>DOMAIN</scope>
    <scope>INTERACTION WITH ERL1; TMM; EPF1 AND EPF2</scope>
    <scope>SUBUNIT</scope>
</reference>
<reference key="29">
    <citation type="journal article" date="2012" name="Proc. Natl. Acad. Sci. U.S.A.">
        <title>Regulation of inflorescence architecture by intertissue layer ligand-receptor communication between endodermis and phloem.</title>
        <authorList>
            <person name="Uchida N."/>
            <person name="Lee J.S."/>
            <person name="Horst R.J."/>
            <person name="Lai H.H."/>
            <person name="Kajita R."/>
            <person name="Kakimoto T."/>
            <person name="Tasaka M."/>
            <person name="Torii K.U."/>
        </authorList>
    </citation>
    <scope>FUNCTION</scope>
    <scope>TISSUE SPECIFICITY</scope>
    <scope>INTERACTION WITH EPFL4 AND EPFL6</scope>
</reference>
<reference key="30">
    <citation type="journal article" date="2013" name="J. Exp. Bot.">
        <title>Regulation of plant vascular stem cells by endodermis-derived EPFL-family peptide hormones and phloem-expressed ERECTA-family receptor kinases.</title>
        <authorList>
            <person name="Uchida N."/>
            <person name="Tasaka M."/>
        </authorList>
    </citation>
    <scope>FUNCTION</scope>
</reference>
<reference key="31">
    <citation type="journal article" date="2015" name="Curr. Biol.">
        <title>Differential function of Arabidopsis SERK family receptor-like kinases in stomatal patterning.</title>
        <authorList>
            <person name="Meng X."/>
            <person name="Chen X."/>
            <person name="Mang H."/>
            <person name="Liu C."/>
            <person name="Yu X."/>
            <person name="Gao X."/>
            <person name="Torii K.U."/>
            <person name="He P."/>
            <person name="Shan L."/>
        </authorList>
    </citation>
    <scope>INTERACTION WITH SERK1; SERK2; SERK3/BAK1 AND SERK4</scope>
</reference>
<reference key="32">
    <citation type="journal article" date="2015" name="Nature">
        <title>Competitive binding of antagonistic peptides fine-tunes stomatal patterning.</title>
        <authorList>
            <person name="Lee J.S."/>
            <person name="Hnilova M."/>
            <person name="Maes M."/>
            <person name="Lin Y.C."/>
            <person name="Putarjunan A."/>
            <person name="Han S.K."/>
            <person name="Avila J."/>
            <person name="Torii K.U."/>
        </authorList>
    </citation>
    <scope>INTERACTION WITH EPFL9</scope>
</reference>
<reference key="33">
    <citation type="journal article" date="2015" name="PLoS Genet.">
        <title>Molecular framework of a regulatory circuit initiating two-dimensional spatial patterning of stomatal lineage.</title>
        <authorList>
            <person name="Horst R.J."/>
            <person name="Fujita H."/>
            <person name="Lee J.S."/>
            <person name="Rychel A.L."/>
            <person name="Garrick J.M."/>
            <person name="Kawaguchi M."/>
            <person name="Peterson K.M."/>
            <person name="Torii K.U."/>
        </authorList>
    </citation>
    <scope>SUBCELLULAR LOCATION</scope>
</reference>
<reference key="34">
    <citation type="journal article" date="2017" name="Genes Dev.">
        <title>A receptor-like protein acts as a specificity switch for the regulation of stomatal development.</title>
        <authorList>
            <person name="Lin G."/>
            <person name="Zhang L."/>
            <person name="Han Z."/>
            <person name="Yang X."/>
            <person name="Liu W."/>
            <person name="Li E."/>
            <person name="Chang J."/>
            <person name="Qi Y."/>
            <person name="Shpak E.D."/>
            <person name="Chai J."/>
        </authorList>
    </citation>
    <scope>FUNCTION</scope>
    <scope>SUBUNIT</scope>
    <scope>INTERACTION WITH TMM</scope>
</reference>